<protein>
    <recommendedName>
        <fullName>Acylphosphatase</fullName>
        <ecNumber>3.6.1.7</ecNumber>
    </recommendedName>
    <alternativeName>
        <fullName>Acylphosphate phosphohydrolase</fullName>
    </alternativeName>
</protein>
<dbReference type="EC" id="3.6.1.7"/>
<dbReference type="EMBL" id="CP000116">
    <property type="protein sequence ID" value="AAZ96812.1"/>
    <property type="molecule type" value="Genomic_DNA"/>
</dbReference>
<dbReference type="RefSeq" id="WP_011311371.1">
    <property type="nucleotide sequence ID" value="NC_007404.1"/>
</dbReference>
<dbReference type="SMR" id="Q3SKG9"/>
<dbReference type="STRING" id="292415.Tbd_0859"/>
<dbReference type="KEGG" id="tbd:Tbd_0859"/>
<dbReference type="eggNOG" id="COG1254">
    <property type="taxonomic scope" value="Bacteria"/>
</dbReference>
<dbReference type="HOGENOM" id="CLU_141932_3_2_4"/>
<dbReference type="OrthoDB" id="5295388at2"/>
<dbReference type="Proteomes" id="UP000008291">
    <property type="component" value="Chromosome"/>
</dbReference>
<dbReference type="GO" id="GO:0003998">
    <property type="term" value="F:acylphosphatase activity"/>
    <property type="evidence" value="ECO:0007669"/>
    <property type="project" value="UniProtKB-EC"/>
</dbReference>
<dbReference type="Gene3D" id="3.30.70.100">
    <property type="match status" value="1"/>
</dbReference>
<dbReference type="InterPro" id="IPR020456">
    <property type="entry name" value="Acylphosphatase"/>
</dbReference>
<dbReference type="InterPro" id="IPR001792">
    <property type="entry name" value="Acylphosphatase-like_dom"/>
</dbReference>
<dbReference type="InterPro" id="IPR036046">
    <property type="entry name" value="Acylphosphatase-like_dom_sf"/>
</dbReference>
<dbReference type="InterPro" id="IPR017968">
    <property type="entry name" value="Acylphosphatase_CS"/>
</dbReference>
<dbReference type="PANTHER" id="PTHR47268">
    <property type="entry name" value="ACYLPHOSPHATASE"/>
    <property type="match status" value="1"/>
</dbReference>
<dbReference type="PANTHER" id="PTHR47268:SF4">
    <property type="entry name" value="ACYLPHOSPHATASE"/>
    <property type="match status" value="1"/>
</dbReference>
<dbReference type="Pfam" id="PF00708">
    <property type="entry name" value="Acylphosphatase"/>
    <property type="match status" value="1"/>
</dbReference>
<dbReference type="PRINTS" id="PR00112">
    <property type="entry name" value="ACYLPHPHTASE"/>
</dbReference>
<dbReference type="SUPFAM" id="SSF54975">
    <property type="entry name" value="Acylphosphatase/BLUF domain-like"/>
    <property type="match status" value="1"/>
</dbReference>
<dbReference type="PROSITE" id="PS00150">
    <property type="entry name" value="ACYLPHOSPHATASE_1"/>
    <property type="match status" value="1"/>
</dbReference>
<dbReference type="PROSITE" id="PS00151">
    <property type="entry name" value="ACYLPHOSPHATASE_2"/>
    <property type="match status" value="1"/>
</dbReference>
<dbReference type="PROSITE" id="PS51160">
    <property type="entry name" value="ACYLPHOSPHATASE_3"/>
    <property type="match status" value="1"/>
</dbReference>
<comment type="catalytic activity">
    <reaction>
        <text>an acyl phosphate + H2O = a carboxylate + phosphate + H(+)</text>
        <dbReference type="Rhea" id="RHEA:14965"/>
        <dbReference type="ChEBI" id="CHEBI:15377"/>
        <dbReference type="ChEBI" id="CHEBI:15378"/>
        <dbReference type="ChEBI" id="CHEBI:29067"/>
        <dbReference type="ChEBI" id="CHEBI:43474"/>
        <dbReference type="ChEBI" id="CHEBI:59918"/>
        <dbReference type="EC" id="3.6.1.7"/>
    </reaction>
</comment>
<comment type="similarity">
    <text evidence="2">Belongs to the acylphosphatase family.</text>
</comment>
<feature type="chain" id="PRO_0000326837" description="Acylphosphatase">
    <location>
        <begin position="1"/>
        <end position="89"/>
    </location>
</feature>
<feature type="domain" description="Acylphosphatase-like" evidence="1">
    <location>
        <begin position="3"/>
        <end position="88"/>
    </location>
</feature>
<feature type="active site" evidence="1">
    <location>
        <position position="18"/>
    </location>
</feature>
<feature type="active site" evidence="1">
    <location>
        <position position="36"/>
    </location>
</feature>
<accession>Q3SKG9</accession>
<evidence type="ECO:0000255" key="1">
    <source>
        <dbReference type="PROSITE-ProRule" id="PRU00520"/>
    </source>
</evidence>
<evidence type="ECO:0000305" key="2"/>
<sequence length="89" mass="9981">MKTLHLQIEGRVQGVWFRESMRREAERLGVDGWVRNRPDGSVEAVVQGTDEAVAALVAWAKMGPPLAHVERVDLSETEGEYSGFEKRSD</sequence>
<name>ACYP_THIDA</name>
<organism>
    <name type="scientific">Thiobacillus denitrificans (strain ATCC 25259 / T1)</name>
    <dbReference type="NCBI Taxonomy" id="292415"/>
    <lineage>
        <taxon>Bacteria</taxon>
        <taxon>Pseudomonadati</taxon>
        <taxon>Pseudomonadota</taxon>
        <taxon>Betaproteobacteria</taxon>
        <taxon>Nitrosomonadales</taxon>
        <taxon>Thiobacillaceae</taxon>
        <taxon>Thiobacillus</taxon>
    </lineage>
</organism>
<reference key="1">
    <citation type="journal article" date="2006" name="J. Bacteriol.">
        <title>The genome sequence of the obligately chemolithoautotrophic, facultatively anaerobic bacterium Thiobacillus denitrificans.</title>
        <authorList>
            <person name="Beller H.R."/>
            <person name="Chain P.S."/>
            <person name="Letain T.E."/>
            <person name="Chakicherla A."/>
            <person name="Larimer F.W."/>
            <person name="Richardson P.M."/>
            <person name="Coleman M.A."/>
            <person name="Wood A.P."/>
            <person name="Kelly D.P."/>
        </authorList>
    </citation>
    <scope>NUCLEOTIDE SEQUENCE [LARGE SCALE GENOMIC DNA]</scope>
    <source>
        <strain>ATCC 25259 / T1</strain>
    </source>
</reference>
<proteinExistence type="inferred from homology"/>
<keyword id="KW-0378">Hydrolase</keyword>
<keyword id="KW-1185">Reference proteome</keyword>
<gene>
    <name type="primary">acyP</name>
    <name type="ordered locus">Tbd_0859</name>
</gene>